<sequence>MSHTSEQGASRPVALMMGALGVVYGDIGTSPLYTLRACLTEFADLQPAHILGVLSILFWLLMVVVSFKYVLLILRADNQGEGGTLALLELAVRGRSGRLRTFFVVLGIFGAALFYGDSMITPAISVLSAIEGIGVVSHTLDPWIVPLALLVLLALFAIQSRGTGTVGKLFGPVMVVWFATLGVLGGWQVWQTPEVLVALNPIWALRFVFEFPVMSFLLLGAVVLALTGAEALYADMGHFGRPAIRRAWFSMVLPSLTLCYLGQGALLLRDPSAIRNPFFLMAPEWGLAALVGLATVATVVASQAVISGAFSVTRQAVQLGFWPRMQILHTSAVEKGQIYLPQVNALLLCAVLVLVITFRNSENLAAAYGFAVTGTMLMTSILAFAVLPRGSTGAKRLGWMLVLGVLLIIDVLLFSANIFKIHEGGWMPLLVGVVVFTLMMTWRRGRQLLADIQARDRQPLQEFMDQLESYPPARVPGTAVFMTLNNDNVPPALLHNLKHNKVLHDHVLFLSIRVADVPYIAEQDRFSVKRVSASSWQAVIHYGFKEDPDVPEALRLVAEAYPEIDLEPMRTSFFLSRQAVVAARRPAMSRWRRTVFSFMARNSTRSTKFFKIPPNRVVEMGMQIEL</sequence>
<feature type="chain" id="PRO_0000279767" description="Probable potassium transport system protein Kup">
    <location>
        <begin position="1"/>
        <end position="626"/>
    </location>
</feature>
<feature type="transmembrane region" description="Helical" evidence="1">
    <location>
        <begin position="13"/>
        <end position="33"/>
    </location>
</feature>
<feature type="transmembrane region" description="Helical" evidence="1">
    <location>
        <begin position="53"/>
        <end position="73"/>
    </location>
</feature>
<feature type="transmembrane region" description="Helical" evidence="1">
    <location>
        <begin position="102"/>
        <end position="122"/>
    </location>
</feature>
<feature type="transmembrane region" description="Helical" evidence="1">
    <location>
        <begin position="138"/>
        <end position="158"/>
    </location>
</feature>
<feature type="transmembrane region" description="Helical" evidence="1">
    <location>
        <begin position="169"/>
        <end position="189"/>
    </location>
</feature>
<feature type="transmembrane region" description="Helical" evidence="1">
    <location>
        <begin position="207"/>
        <end position="227"/>
    </location>
</feature>
<feature type="transmembrane region" description="Helical" evidence="1">
    <location>
        <begin position="248"/>
        <end position="268"/>
    </location>
</feature>
<feature type="transmembrane region" description="Helical" evidence="1">
    <location>
        <begin position="277"/>
        <end position="297"/>
    </location>
</feature>
<feature type="transmembrane region" description="Helical" evidence="1">
    <location>
        <begin position="338"/>
        <end position="358"/>
    </location>
</feature>
<feature type="transmembrane region" description="Helical" evidence="1">
    <location>
        <begin position="367"/>
        <end position="387"/>
    </location>
</feature>
<feature type="transmembrane region" description="Helical" evidence="1">
    <location>
        <begin position="399"/>
        <end position="419"/>
    </location>
</feature>
<feature type="transmembrane region" description="Helical" evidence="1">
    <location>
        <begin position="421"/>
        <end position="441"/>
    </location>
</feature>
<reference key="1">
    <citation type="journal article" date="2006" name="J. Bacteriol.">
        <title>Comparison of the genome sequence of the poultry pathogen Bordetella avium with those of B. bronchiseptica, B. pertussis, and B. parapertussis reveals extensive diversity in surface structures associated with host interaction.</title>
        <authorList>
            <person name="Sebaihia M."/>
            <person name="Preston A."/>
            <person name="Maskell D.J."/>
            <person name="Kuzmiak H."/>
            <person name="Connell T.D."/>
            <person name="King N.D."/>
            <person name="Orndorff P.E."/>
            <person name="Miyamoto D.M."/>
            <person name="Thomson N.R."/>
            <person name="Harris D."/>
            <person name="Goble A."/>
            <person name="Lord A."/>
            <person name="Murphy L."/>
            <person name="Quail M.A."/>
            <person name="Rutter S."/>
            <person name="Squares R."/>
            <person name="Squares S."/>
            <person name="Woodward J."/>
            <person name="Parkhill J."/>
            <person name="Temple L.M."/>
        </authorList>
    </citation>
    <scope>NUCLEOTIDE SEQUENCE [LARGE SCALE GENOMIC DNA]</scope>
    <source>
        <strain>197N</strain>
    </source>
</reference>
<organism>
    <name type="scientific">Bordetella avium (strain 197N)</name>
    <dbReference type="NCBI Taxonomy" id="360910"/>
    <lineage>
        <taxon>Bacteria</taxon>
        <taxon>Pseudomonadati</taxon>
        <taxon>Pseudomonadota</taxon>
        <taxon>Betaproteobacteria</taxon>
        <taxon>Burkholderiales</taxon>
        <taxon>Alcaligenaceae</taxon>
        <taxon>Bordetella</taxon>
    </lineage>
</organism>
<accession>Q2KZC5</accession>
<gene>
    <name evidence="1" type="primary">kup</name>
    <name type="ordered locus">BAV2115</name>
</gene>
<evidence type="ECO:0000255" key="1">
    <source>
        <dbReference type="HAMAP-Rule" id="MF_01522"/>
    </source>
</evidence>
<name>KUP_BORA1</name>
<proteinExistence type="inferred from homology"/>
<keyword id="KW-0997">Cell inner membrane</keyword>
<keyword id="KW-1003">Cell membrane</keyword>
<keyword id="KW-0406">Ion transport</keyword>
<keyword id="KW-0472">Membrane</keyword>
<keyword id="KW-0630">Potassium</keyword>
<keyword id="KW-0633">Potassium transport</keyword>
<keyword id="KW-1185">Reference proteome</keyword>
<keyword id="KW-0769">Symport</keyword>
<keyword id="KW-0812">Transmembrane</keyword>
<keyword id="KW-1133">Transmembrane helix</keyword>
<keyword id="KW-0813">Transport</keyword>
<comment type="function">
    <text evidence="1">Transport of potassium into the cell. Likely operates as a K(+):H(+) symporter.</text>
</comment>
<comment type="catalytic activity">
    <reaction evidence="1">
        <text>K(+)(in) + H(+)(in) = K(+)(out) + H(+)(out)</text>
        <dbReference type="Rhea" id="RHEA:28490"/>
        <dbReference type="ChEBI" id="CHEBI:15378"/>
        <dbReference type="ChEBI" id="CHEBI:29103"/>
    </reaction>
    <physiologicalReaction direction="right-to-left" evidence="1">
        <dbReference type="Rhea" id="RHEA:28492"/>
    </physiologicalReaction>
</comment>
<comment type="subcellular location">
    <subcellularLocation>
        <location evidence="1">Cell inner membrane</location>
        <topology evidence="1">Multi-pass membrane protein</topology>
    </subcellularLocation>
</comment>
<comment type="similarity">
    <text evidence="1">Belongs to the HAK/KUP transporter (TC 2.A.72) family.</text>
</comment>
<protein>
    <recommendedName>
        <fullName evidence="1">Probable potassium transport system protein Kup</fullName>
    </recommendedName>
</protein>
<dbReference type="EMBL" id="AM167904">
    <property type="protein sequence ID" value="CAJ49725.1"/>
    <property type="molecule type" value="Genomic_DNA"/>
</dbReference>
<dbReference type="RefSeq" id="WP_012417781.1">
    <property type="nucleotide sequence ID" value="NC_010645.1"/>
</dbReference>
<dbReference type="SMR" id="Q2KZC5"/>
<dbReference type="STRING" id="360910.BAV2115"/>
<dbReference type="GeneID" id="92934827"/>
<dbReference type="KEGG" id="bav:BAV2115"/>
<dbReference type="eggNOG" id="COG3158">
    <property type="taxonomic scope" value="Bacteria"/>
</dbReference>
<dbReference type="HOGENOM" id="CLU_008142_4_2_4"/>
<dbReference type="OrthoDB" id="9805577at2"/>
<dbReference type="Proteomes" id="UP000001977">
    <property type="component" value="Chromosome"/>
</dbReference>
<dbReference type="GO" id="GO:0005886">
    <property type="term" value="C:plasma membrane"/>
    <property type="evidence" value="ECO:0007669"/>
    <property type="project" value="UniProtKB-SubCell"/>
</dbReference>
<dbReference type="GO" id="GO:0015079">
    <property type="term" value="F:potassium ion transmembrane transporter activity"/>
    <property type="evidence" value="ECO:0007669"/>
    <property type="project" value="UniProtKB-UniRule"/>
</dbReference>
<dbReference type="GO" id="GO:0015293">
    <property type="term" value="F:symporter activity"/>
    <property type="evidence" value="ECO:0007669"/>
    <property type="project" value="UniProtKB-UniRule"/>
</dbReference>
<dbReference type="HAMAP" id="MF_01522">
    <property type="entry name" value="Kup"/>
    <property type="match status" value="1"/>
</dbReference>
<dbReference type="InterPro" id="IPR003855">
    <property type="entry name" value="K+_transporter"/>
</dbReference>
<dbReference type="InterPro" id="IPR053952">
    <property type="entry name" value="K_trans_C"/>
</dbReference>
<dbReference type="InterPro" id="IPR053951">
    <property type="entry name" value="K_trans_N"/>
</dbReference>
<dbReference type="InterPro" id="IPR023051">
    <property type="entry name" value="Kup"/>
</dbReference>
<dbReference type="PANTHER" id="PTHR30540:SF79">
    <property type="entry name" value="LOW AFFINITY POTASSIUM TRANSPORT SYSTEM PROTEIN KUP"/>
    <property type="match status" value="1"/>
</dbReference>
<dbReference type="PANTHER" id="PTHR30540">
    <property type="entry name" value="OSMOTIC STRESS POTASSIUM TRANSPORTER"/>
    <property type="match status" value="1"/>
</dbReference>
<dbReference type="Pfam" id="PF02705">
    <property type="entry name" value="K_trans"/>
    <property type="match status" value="1"/>
</dbReference>
<dbReference type="Pfam" id="PF22776">
    <property type="entry name" value="K_trans_C"/>
    <property type="match status" value="1"/>
</dbReference>